<accession>B3R7S3</accession>
<feature type="chain" id="PRO_1000141851" description="Large ribosomal subunit protein uL3">
    <location>
        <begin position="1"/>
        <end position="216"/>
    </location>
</feature>
<feature type="region of interest" description="Disordered" evidence="2">
    <location>
        <begin position="134"/>
        <end position="153"/>
    </location>
</feature>
<feature type="modified residue" description="N5-methylglutamine" evidence="1">
    <location>
        <position position="153"/>
    </location>
</feature>
<name>RL3_CUPTR</name>
<organism>
    <name type="scientific">Cupriavidus taiwanensis (strain DSM 17343 / BCRC 17206 / CCUG 44338 / CIP 107171 / LMG 19424 / R1)</name>
    <name type="common">Ralstonia taiwanensis (strain LMG 19424)</name>
    <dbReference type="NCBI Taxonomy" id="977880"/>
    <lineage>
        <taxon>Bacteria</taxon>
        <taxon>Pseudomonadati</taxon>
        <taxon>Pseudomonadota</taxon>
        <taxon>Betaproteobacteria</taxon>
        <taxon>Burkholderiales</taxon>
        <taxon>Burkholderiaceae</taxon>
        <taxon>Cupriavidus</taxon>
    </lineage>
</organism>
<gene>
    <name evidence="1" type="primary">rplC</name>
    <name type="ordered locus">RALTA_A2944</name>
</gene>
<reference key="1">
    <citation type="journal article" date="2008" name="Genome Res.">
        <title>Genome sequence of the beta-rhizobium Cupriavidus taiwanensis and comparative genomics of rhizobia.</title>
        <authorList>
            <person name="Amadou C."/>
            <person name="Pascal G."/>
            <person name="Mangenot S."/>
            <person name="Glew M."/>
            <person name="Bontemps C."/>
            <person name="Capela D."/>
            <person name="Carrere S."/>
            <person name="Cruveiller S."/>
            <person name="Dossat C."/>
            <person name="Lajus A."/>
            <person name="Marchetti M."/>
            <person name="Poinsot V."/>
            <person name="Rouy Z."/>
            <person name="Servin B."/>
            <person name="Saad M."/>
            <person name="Schenowitz C."/>
            <person name="Barbe V."/>
            <person name="Batut J."/>
            <person name="Medigue C."/>
            <person name="Masson-Boivin C."/>
        </authorList>
    </citation>
    <scope>NUCLEOTIDE SEQUENCE [LARGE SCALE GENOMIC DNA]</scope>
    <source>
        <strain>DSM 17343 / BCRC 17206 / CCUG 44338 / CIP 107171 / LMG 19424 / R1</strain>
    </source>
</reference>
<sequence length="216" mass="22754">MSLGLVGRKVGMTRIFTDDGEAIPVTVVEVGDNRVTQIKTDETDGYTAVQVTFGARRASRVTKPLAGHLAKAGVEAGEIIREFRIDAAKAAELQAGGSLSVDLFEVGQKIDVQGVTIGKGYAGTIKRYHFASGRATHGNSRSHNVPGSIGMAQDPGRVFPGKRMTGHLGDVTRTVQNLEIAKIDAERKLLLVKGAIPGSKNGKVIVTPAVKAKAKA</sequence>
<keyword id="KW-0488">Methylation</keyword>
<keyword id="KW-0687">Ribonucleoprotein</keyword>
<keyword id="KW-0689">Ribosomal protein</keyword>
<keyword id="KW-0694">RNA-binding</keyword>
<keyword id="KW-0699">rRNA-binding</keyword>
<evidence type="ECO:0000255" key="1">
    <source>
        <dbReference type="HAMAP-Rule" id="MF_01325"/>
    </source>
</evidence>
<evidence type="ECO:0000256" key="2">
    <source>
        <dbReference type="SAM" id="MobiDB-lite"/>
    </source>
</evidence>
<evidence type="ECO:0000305" key="3"/>
<proteinExistence type="inferred from homology"/>
<protein>
    <recommendedName>
        <fullName evidence="1">Large ribosomal subunit protein uL3</fullName>
    </recommendedName>
    <alternativeName>
        <fullName evidence="3">50S ribosomal protein L3</fullName>
    </alternativeName>
</protein>
<comment type="function">
    <text evidence="1">One of the primary rRNA binding proteins, it binds directly near the 3'-end of the 23S rRNA, where it nucleates assembly of the 50S subunit.</text>
</comment>
<comment type="subunit">
    <text evidence="1">Part of the 50S ribosomal subunit. Forms a cluster with proteins L14 and L19.</text>
</comment>
<comment type="PTM">
    <text evidence="1">Methylated by PrmB.</text>
</comment>
<comment type="similarity">
    <text evidence="1">Belongs to the universal ribosomal protein uL3 family.</text>
</comment>
<dbReference type="EMBL" id="CU633749">
    <property type="protein sequence ID" value="CAQ70868.1"/>
    <property type="molecule type" value="Genomic_DNA"/>
</dbReference>
<dbReference type="RefSeq" id="WP_010812397.1">
    <property type="nucleotide sequence ID" value="NC_010528.1"/>
</dbReference>
<dbReference type="SMR" id="B3R7S3"/>
<dbReference type="GeneID" id="29761773"/>
<dbReference type="KEGG" id="cti:RALTA_A2944"/>
<dbReference type="eggNOG" id="COG0087">
    <property type="taxonomic scope" value="Bacteria"/>
</dbReference>
<dbReference type="HOGENOM" id="CLU_044142_4_1_4"/>
<dbReference type="BioCyc" id="CTAI977880:RALTA_RS14355-MONOMER"/>
<dbReference type="Proteomes" id="UP000001692">
    <property type="component" value="Chromosome 1"/>
</dbReference>
<dbReference type="GO" id="GO:0022625">
    <property type="term" value="C:cytosolic large ribosomal subunit"/>
    <property type="evidence" value="ECO:0007669"/>
    <property type="project" value="TreeGrafter"/>
</dbReference>
<dbReference type="GO" id="GO:0019843">
    <property type="term" value="F:rRNA binding"/>
    <property type="evidence" value="ECO:0007669"/>
    <property type="project" value="UniProtKB-UniRule"/>
</dbReference>
<dbReference type="GO" id="GO:0003735">
    <property type="term" value="F:structural constituent of ribosome"/>
    <property type="evidence" value="ECO:0007669"/>
    <property type="project" value="InterPro"/>
</dbReference>
<dbReference type="GO" id="GO:0006412">
    <property type="term" value="P:translation"/>
    <property type="evidence" value="ECO:0007669"/>
    <property type="project" value="UniProtKB-UniRule"/>
</dbReference>
<dbReference type="FunFam" id="2.40.30.10:FF:000004">
    <property type="entry name" value="50S ribosomal protein L3"/>
    <property type="match status" value="1"/>
</dbReference>
<dbReference type="FunFam" id="3.30.160.810:FF:000001">
    <property type="entry name" value="50S ribosomal protein L3"/>
    <property type="match status" value="1"/>
</dbReference>
<dbReference type="Gene3D" id="3.30.160.810">
    <property type="match status" value="1"/>
</dbReference>
<dbReference type="Gene3D" id="2.40.30.10">
    <property type="entry name" value="Translation factors"/>
    <property type="match status" value="1"/>
</dbReference>
<dbReference type="HAMAP" id="MF_01325_B">
    <property type="entry name" value="Ribosomal_uL3_B"/>
    <property type="match status" value="1"/>
</dbReference>
<dbReference type="InterPro" id="IPR000597">
    <property type="entry name" value="Ribosomal_uL3"/>
</dbReference>
<dbReference type="InterPro" id="IPR019927">
    <property type="entry name" value="Ribosomal_uL3_bac/org-type"/>
</dbReference>
<dbReference type="InterPro" id="IPR019926">
    <property type="entry name" value="Ribosomal_uL3_CS"/>
</dbReference>
<dbReference type="InterPro" id="IPR009000">
    <property type="entry name" value="Transl_B-barrel_sf"/>
</dbReference>
<dbReference type="NCBIfam" id="TIGR03625">
    <property type="entry name" value="L3_bact"/>
    <property type="match status" value="1"/>
</dbReference>
<dbReference type="PANTHER" id="PTHR11229">
    <property type="entry name" value="50S RIBOSOMAL PROTEIN L3"/>
    <property type="match status" value="1"/>
</dbReference>
<dbReference type="PANTHER" id="PTHR11229:SF16">
    <property type="entry name" value="LARGE RIBOSOMAL SUBUNIT PROTEIN UL3C"/>
    <property type="match status" value="1"/>
</dbReference>
<dbReference type="Pfam" id="PF00297">
    <property type="entry name" value="Ribosomal_L3"/>
    <property type="match status" value="1"/>
</dbReference>
<dbReference type="SUPFAM" id="SSF50447">
    <property type="entry name" value="Translation proteins"/>
    <property type="match status" value="1"/>
</dbReference>
<dbReference type="PROSITE" id="PS00474">
    <property type="entry name" value="RIBOSOMAL_L3"/>
    <property type="match status" value="1"/>
</dbReference>